<proteinExistence type="inferred from homology"/>
<name>DEGS2_CAEEL</name>
<protein>
    <recommendedName>
        <fullName>Putative sphingolipid delta(4)-desaturase/C4-monooxygenase</fullName>
        <ecNumber>1.14.18.5</ecNumber>
        <ecNumber>1.14.19.17</ecNumber>
    </recommendedName>
    <alternativeName>
        <fullName>Sphingolipid 4-desaturase</fullName>
    </alternativeName>
    <alternativeName>
        <fullName>Sphingolipid C4-monooxygenase</fullName>
    </alternativeName>
</protein>
<accession>G5EC63</accession>
<evidence type="ECO:0000250" key="1">
    <source>
        <dbReference type="UniProtKB" id="Q6QHC5"/>
    </source>
</evidence>
<evidence type="ECO:0000250" key="2">
    <source>
        <dbReference type="UniProtKB" id="Q8R2F2"/>
    </source>
</evidence>
<evidence type="ECO:0000255" key="3"/>
<evidence type="ECO:0000269" key="4">
    <source>
    </source>
</evidence>
<evidence type="ECO:0000305" key="5"/>
<dbReference type="EC" id="1.14.18.5"/>
<dbReference type="EC" id="1.14.19.17"/>
<dbReference type="EMBL" id="BX284601">
    <property type="protein sequence ID" value="CAA21659.2"/>
    <property type="molecule type" value="Genomic_DNA"/>
</dbReference>
<dbReference type="PIR" id="G87999">
    <property type="entry name" value="G87999"/>
</dbReference>
<dbReference type="PIR" id="T27158">
    <property type="entry name" value="T27158"/>
</dbReference>
<dbReference type="RefSeq" id="NP_493549.1">
    <property type="nucleotide sequence ID" value="NM_061148.4"/>
</dbReference>
<dbReference type="BioGRID" id="38712">
    <property type="interactions" value="4"/>
</dbReference>
<dbReference type="FunCoup" id="G5EC63">
    <property type="interactions" value="1640"/>
</dbReference>
<dbReference type="IntAct" id="G5EC63">
    <property type="interactions" value="2"/>
</dbReference>
<dbReference type="STRING" id="6239.Y54E5A.1.1"/>
<dbReference type="PaxDb" id="6239-Y54E5A.1"/>
<dbReference type="PeptideAtlas" id="G5EC63"/>
<dbReference type="EnsemblMetazoa" id="Y54E5A.1.1">
    <property type="protein sequence ID" value="Y54E5A.1.1"/>
    <property type="gene ID" value="WBGene00013197"/>
</dbReference>
<dbReference type="EnsemblMetazoa" id="Y54E5A.1.2">
    <property type="protein sequence ID" value="Y54E5A.1.2"/>
    <property type="gene ID" value="WBGene00013197"/>
</dbReference>
<dbReference type="GeneID" id="173327"/>
<dbReference type="KEGG" id="cel:CELE_Y54E5A.1"/>
<dbReference type="AGR" id="WB:WBGene00013197"/>
<dbReference type="CTD" id="173327"/>
<dbReference type="WormBase" id="Y54E5A.1">
    <property type="protein sequence ID" value="CE28791"/>
    <property type="gene ID" value="WBGene00013197"/>
    <property type="gene designation" value="ttm-5"/>
</dbReference>
<dbReference type="eggNOG" id="KOG2987">
    <property type="taxonomic scope" value="Eukaryota"/>
</dbReference>
<dbReference type="GeneTree" id="ENSGT00390000013448"/>
<dbReference type="HOGENOM" id="CLU_032156_0_0_1"/>
<dbReference type="InParanoid" id="G5EC63"/>
<dbReference type="OMA" id="GATCNQN"/>
<dbReference type="OrthoDB" id="200948at2759"/>
<dbReference type="PhylomeDB" id="G5EC63"/>
<dbReference type="BRENDA" id="1.14.19.17">
    <property type="organism ID" value="1045"/>
</dbReference>
<dbReference type="Reactome" id="R-CEL-1660661">
    <property type="pathway name" value="Sphingolipid de novo biosynthesis"/>
</dbReference>
<dbReference type="Reactome" id="R-CEL-6798695">
    <property type="pathway name" value="Neutrophil degranulation"/>
</dbReference>
<dbReference type="UniPathway" id="UPA00222"/>
<dbReference type="PRO" id="PR:G5EC63"/>
<dbReference type="Proteomes" id="UP000001940">
    <property type="component" value="Chromosome I"/>
</dbReference>
<dbReference type="Bgee" id="WBGene00013197">
    <property type="expression patterns" value="Expressed in pharyngeal muscle cell (C elegans) and 3 other cell types or tissues"/>
</dbReference>
<dbReference type="GO" id="GO:0016020">
    <property type="term" value="C:membrane"/>
    <property type="evidence" value="ECO:0007669"/>
    <property type="project" value="UniProtKB-SubCell"/>
</dbReference>
<dbReference type="GO" id="GO:0102772">
    <property type="term" value="F:sphingolipid C4-monooxygenase activity"/>
    <property type="evidence" value="ECO:0007669"/>
    <property type="project" value="UniProtKB-EC"/>
</dbReference>
<dbReference type="GO" id="GO:0042284">
    <property type="term" value="F:sphingolipid delta-4 desaturase activity"/>
    <property type="evidence" value="ECO:0000318"/>
    <property type="project" value="GO_Central"/>
</dbReference>
<dbReference type="GO" id="GO:0046513">
    <property type="term" value="P:ceramide biosynthetic process"/>
    <property type="evidence" value="ECO:0000318"/>
    <property type="project" value="GO_Central"/>
</dbReference>
<dbReference type="CDD" id="cd03508">
    <property type="entry name" value="Delta4-sphingolipid-FADS-like"/>
    <property type="match status" value="1"/>
</dbReference>
<dbReference type="InterPro" id="IPR011388">
    <property type="entry name" value="DES1/DES2"/>
</dbReference>
<dbReference type="InterPro" id="IPR005804">
    <property type="entry name" value="FA_desaturase_dom"/>
</dbReference>
<dbReference type="InterPro" id="IPR013866">
    <property type="entry name" value="Sphingolipid_d4-desaturase_N"/>
</dbReference>
<dbReference type="PANTHER" id="PTHR12879">
    <property type="entry name" value="SPHINGOLIPID DELTA 4 DESATURASE/C-4 HYDROXYLASE PROTEIN DES2"/>
    <property type="match status" value="1"/>
</dbReference>
<dbReference type="PANTHER" id="PTHR12879:SF20">
    <property type="entry name" value="SPHINGOLIPID DELTA(4)-DESATURASE_C4-MONOOXYGENASE-RELATED"/>
    <property type="match status" value="1"/>
</dbReference>
<dbReference type="Pfam" id="PF00487">
    <property type="entry name" value="FA_desaturase"/>
    <property type="match status" value="1"/>
</dbReference>
<dbReference type="Pfam" id="PF08557">
    <property type="entry name" value="Lipid_DES"/>
    <property type="match status" value="1"/>
</dbReference>
<dbReference type="PIRSF" id="PIRSF017228">
    <property type="entry name" value="Sphnglp_dlt4_des"/>
    <property type="match status" value="1"/>
</dbReference>
<dbReference type="SMART" id="SM01269">
    <property type="entry name" value="Lipid_DES"/>
    <property type="match status" value="1"/>
</dbReference>
<feature type="chain" id="PRO_0000421295" description="Putative sphingolipid delta(4)-desaturase/C4-monooxygenase">
    <location>
        <begin position="1"/>
        <end position="362"/>
    </location>
</feature>
<feature type="transmembrane region" description="Helical" evidence="3">
    <location>
        <begin position="45"/>
        <end position="61"/>
    </location>
</feature>
<feature type="transmembrane region" description="Helical" evidence="3">
    <location>
        <begin position="71"/>
        <end position="91"/>
    </location>
</feature>
<feature type="transmembrane region" description="Helical" evidence="3">
    <location>
        <begin position="107"/>
        <end position="127"/>
    </location>
</feature>
<feature type="transmembrane region" description="Helical" evidence="3">
    <location>
        <begin position="160"/>
        <end position="177"/>
    </location>
</feature>
<feature type="transmembrane region" description="Helical" evidence="3">
    <location>
        <begin position="198"/>
        <end position="218"/>
    </location>
</feature>
<feature type="short sequence motif" description="Histidine box-1" evidence="5">
    <location>
        <begin position="89"/>
        <end position="93"/>
    </location>
</feature>
<feature type="short sequence motif" description="Histidine box-2" evidence="5">
    <location>
        <begin position="128"/>
        <end position="132"/>
    </location>
</feature>
<feature type="short sequence motif" description="Histidine box-3" evidence="5">
    <location>
        <begin position="259"/>
        <end position="263"/>
    </location>
</feature>
<organism>
    <name type="scientific">Caenorhabditis elegans</name>
    <dbReference type="NCBI Taxonomy" id="6239"/>
    <lineage>
        <taxon>Eukaryota</taxon>
        <taxon>Metazoa</taxon>
        <taxon>Ecdysozoa</taxon>
        <taxon>Nematoda</taxon>
        <taxon>Chromadorea</taxon>
        <taxon>Rhabditida</taxon>
        <taxon>Rhabditina</taxon>
        <taxon>Rhabditomorpha</taxon>
        <taxon>Rhabditoidea</taxon>
        <taxon>Rhabditidae</taxon>
        <taxon>Peloderinae</taxon>
        <taxon>Caenorhabditis</taxon>
    </lineage>
</organism>
<gene>
    <name type="primary">ttm-5</name>
    <name type="ORF">Y54E5A.1</name>
</gene>
<sequence>MGQSVSRDDFIWTLTEQPHMSRREEIVKKYPEVKKLFGVDPSLKYVVSSLVIFQIFMCWLLQDADWILIILEAYFCGGIINHAMTLAIHDISHNTAFGNKYPLKNRFFGMWANLPIAVPISVSFKKYHVEHHRYLGEDGLDTDVPTTFEAEFFTTAPRKLLWLALQPFFYGFRPLIIYKKAPTDMEILNAIIQISFDLLILHFFGVKSLFYLLFGTIISMGLHPSAGHFISEHYAFKEDQETFSYYGLWNLCTFNVGYHVEHHDFPYIPGRDLPKLRAMAPEYYENLLKHTSMMQILTEFVVNPAMGPYARLKRKPRVAQEFYGNYQLFEYVEGFLHHIGVYRLQKFAVNVFDLNNNSKKLN</sequence>
<comment type="function">
    <text evidence="2 4">Bifunctional enzyme which acts both as a sphingolipid delta(4)-desaturase and a sphingolipid C4-monooxygenase (By similarity). C.elegans contain specific sphingoid bases, which are unique or different in structure compared to the sphingoid bases found in other animals (PubMed:30155209). Two examples of these distinctive compounds are: 15-methylhexadecasphinganine and 15-methylhexadecasphing-4-enine and this enzyme can catalyze their conversion (By similarity).</text>
</comment>
<comment type="catalytic activity">
    <reaction evidence="2">
        <text>an N-acyl-15-methylhexadecasphinganine + 2 Fe(II)-[cytochrome b5] + O2 + 2 H(+) = an N-acyl-4-hydroxy-15-methylhexadecasphinganine + 2 Fe(III)-[cytochrome b5] + H2O</text>
        <dbReference type="Rhea" id="RHEA:81475"/>
        <dbReference type="Rhea" id="RHEA-COMP:10438"/>
        <dbReference type="Rhea" id="RHEA-COMP:10439"/>
        <dbReference type="ChEBI" id="CHEBI:15377"/>
        <dbReference type="ChEBI" id="CHEBI:15378"/>
        <dbReference type="ChEBI" id="CHEBI:15379"/>
        <dbReference type="ChEBI" id="CHEBI:29033"/>
        <dbReference type="ChEBI" id="CHEBI:29034"/>
        <dbReference type="ChEBI" id="CHEBI:70845"/>
        <dbReference type="ChEBI" id="CHEBI:71234"/>
    </reaction>
    <physiologicalReaction direction="left-to-right" evidence="5">
        <dbReference type="Rhea" id="RHEA:81476"/>
    </physiologicalReaction>
</comment>
<comment type="catalytic activity">
    <reaction evidence="2">
        <text>an N-acyl-15-methylhexadecasphinganine + 2 Fe(II)-[cytochrome b5] + O2 + 2 H(+) = an N-acyl-15-methylhexadecasphing-4-enine + 2 Fe(III)-[cytochrome b5] + 2 H2O</text>
        <dbReference type="Rhea" id="RHEA:81479"/>
        <dbReference type="Rhea" id="RHEA-COMP:10438"/>
        <dbReference type="Rhea" id="RHEA-COMP:10439"/>
        <dbReference type="ChEBI" id="CHEBI:15377"/>
        <dbReference type="ChEBI" id="CHEBI:15378"/>
        <dbReference type="ChEBI" id="CHEBI:15379"/>
        <dbReference type="ChEBI" id="CHEBI:29033"/>
        <dbReference type="ChEBI" id="CHEBI:29034"/>
        <dbReference type="ChEBI" id="CHEBI:70845"/>
        <dbReference type="ChEBI" id="CHEBI:70846"/>
    </reaction>
    <physiologicalReaction direction="left-to-right" evidence="5">
        <dbReference type="Rhea" id="RHEA:81480"/>
    </physiologicalReaction>
</comment>
<comment type="catalytic activity">
    <reaction evidence="2">
        <text>a dihydroceramide + 2 Fe(II)-[cytochrome b5] + O2 + 2 H(+) = a phytoceramide + 2 Fe(III)-[cytochrome b5] + H2O</text>
        <dbReference type="Rhea" id="RHEA:55808"/>
        <dbReference type="Rhea" id="RHEA-COMP:10438"/>
        <dbReference type="Rhea" id="RHEA-COMP:10439"/>
        <dbReference type="ChEBI" id="CHEBI:15377"/>
        <dbReference type="ChEBI" id="CHEBI:15378"/>
        <dbReference type="ChEBI" id="CHEBI:15379"/>
        <dbReference type="ChEBI" id="CHEBI:29033"/>
        <dbReference type="ChEBI" id="CHEBI:29034"/>
        <dbReference type="ChEBI" id="CHEBI:139048"/>
        <dbReference type="ChEBI" id="CHEBI:139051"/>
        <dbReference type="EC" id="1.14.18.5"/>
    </reaction>
    <physiologicalReaction direction="left-to-right" evidence="2">
        <dbReference type="Rhea" id="RHEA:55809"/>
    </physiologicalReaction>
</comment>
<comment type="catalytic activity">
    <reaction evidence="2">
        <text>an N-acylsphinganine + 2 Fe(II)-[cytochrome b5] + O2 + 2 H(+) = an N-acylsphing-4-enine + 2 Fe(III)-[cytochrome b5] + 2 H2O</text>
        <dbReference type="Rhea" id="RHEA:46544"/>
        <dbReference type="Rhea" id="RHEA-COMP:10438"/>
        <dbReference type="Rhea" id="RHEA-COMP:10439"/>
        <dbReference type="ChEBI" id="CHEBI:15377"/>
        <dbReference type="ChEBI" id="CHEBI:15378"/>
        <dbReference type="ChEBI" id="CHEBI:15379"/>
        <dbReference type="ChEBI" id="CHEBI:29033"/>
        <dbReference type="ChEBI" id="CHEBI:29034"/>
        <dbReference type="ChEBI" id="CHEBI:31488"/>
        <dbReference type="ChEBI" id="CHEBI:52639"/>
        <dbReference type="EC" id="1.14.19.17"/>
    </reaction>
    <physiologicalReaction direction="left-to-right" evidence="2">
        <dbReference type="Rhea" id="RHEA:46545"/>
    </physiologicalReaction>
</comment>
<comment type="catalytic activity">
    <reaction evidence="1">
        <text>N-octanoylsphinganine + 2 Fe(II)-[cytochrome b5] + O2 + 2 H(+) = N-octanoyl-4-hydroxysphinganine + 2 Fe(III)-[cytochrome b5] + H2O</text>
        <dbReference type="Rhea" id="RHEA:43116"/>
        <dbReference type="Rhea" id="RHEA-COMP:10438"/>
        <dbReference type="Rhea" id="RHEA-COMP:10439"/>
        <dbReference type="ChEBI" id="CHEBI:15377"/>
        <dbReference type="ChEBI" id="CHEBI:15378"/>
        <dbReference type="ChEBI" id="CHEBI:15379"/>
        <dbReference type="ChEBI" id="CHEBI:29033"/>
        <dbReference type="ChEBI" id="CHEBI:29034"/>
        <dbReference type="ChEBI" id="CHEBI:82841"/>
        <dbReference type="ChEBI" id="CHEBI:82842"/>
    </reaction>
    <physiologicalReaction direction="left-to-right" evidence="1">
        <dbReference type="Rhea" id="RHEA:43117"/>
    </physiologicalReaction>
</comment>
<comment type="catalytic activity">
    <reaction evidence="1">
        <text>an N-acylsphinganine + 2 Fe(II)-[cytochrome b5] + O2 + 2 H(+) = an N-acyl-(4R)-4-hydroxysphinganine + 2 Fe(III)-[cytochrome b5] + H2O</text>
        <dbReference type="Rhea" id="RHEA:46364"/>
        <dbReference type="Rhea" id="RHEA-COMP:10438"/>
        <dbReference type="Rhea" id="RHEA-COMP:10439"/>
        <dbReference type="ChEBI" id="CHEBI:15377"/>
        <dbReference type="ChEBI" id="CHEBI:15378"/>
        <dbReference type="ChEBI" id="CHEBI:15379"/>
        <dbReference type="ChEBI" id="CHEBI:29033"/>
        <dbReference type="ChEBI" id="CHEBI:29034"/>
        <dbReference type="ChEBI" id="CHEBI:31488"/>
        <dbReference type="ChEBI" id="CHEBI:31998"/>
        <dbReference type="EC" id="1.14.18.5"/>
    </reaction>
    <physiologicalReaction direction="left-to-right" evidence="1">
        <dbReference type="Rhea" id="RHEA:46365"/>
    </physiologicalReaction>
</comment>
<comment type="pathway">
    <text>Lipid metabolism; sphingolipid metabolism.</text>
</comment>
<comment type="subcellular location">
    <subcellularLocation>
        <location evidence="5">Membrane</location>
        <topology evidence="5">Multi-pass membrane protein</topology>
    </subcellularLocation>
</comment>
<comment type="similarity">
    <text evidence="5">Belongs to the fatty acid desaturase type 1 family. DEGS subfamily.</text>
</comment>
<keyword id="KW-0443">Lipid metabolism</keyword>
<keyword id="KW-0472">Membrane</keyword>
<keyword id="KW-0560">Oxidoreductase</keyword>
<keyword id="KW-1185">Reference proteome</keyword>
<keyword id="KW-0746">Sphingolipid metabolism</keyword>
<keyword id="KW-0812">Transmembrane</keyword>
<keyword id="KW-1133">Transmembrane helix</keyword>
<reference key="1">
    <citation type="journal article" date="1998" name="Science">
        <title>Genome sequence of the nematode C. elegans: a platform for investigating biology.</title>
        <authorList>
            <consortium name="The C. elegans sequencing consortium"/>
        </authorList>
    </citation>
    <scope>NUCLEOTIDE SEQUENCE [LARGE SCALE GENOMIC DNA]</scope>
    <source>
        <strain>Bristol N2</strain>
    </source>
</reference>
<reference key="2">
    <citation type="journal article" date="2017" name="Chem. Sci.">
        <title>Structure and conserved function of iso-branched sphingoid bases from the nematode Caenorhabditis elegans.</title>
        <authorList>
            <person name="Hannich J.T."/>
            <person name="Mellal D."/>
            <person name="Feng S."/>
            <person name="Zumbuehl A."/>
            <person name="Riezman H."/>
        </authorList>
    </citation>
    <scope>FUNCTION</scope>
</reference>